<protein>
    <recommendedName>
        <fullName>Death-associated protein kinase 2</fullName>
        <shortName>DAP kinase 2</shortName>
        <ecNumber evidence="5 12">2.7.11.1</ecNumber>
    </recommendedName>
    <alternativeName>
        <fullName>DAP-kinase-related protein 1</fullName>
        <shortName>DRP-1</shortName>
    </alternativeName>
</protein>
<dbReference type="EC" id="2.7.11.1" evidence="5 12"/>
<dbReference type="EMBL" id="AB018001">
    <property type="protein sequence ID" value="BAA88063.1"/>
    <property type="molecule type" value="mRNA"/>
</dbReference>
<dbReference type="EMBL" id="AF052941">
    <property type="protein sequence ID" value="AAC35001.1"/>
    <property type="molecule type" value="mRNA"/>
</dbReference>
<dbReference type="EMBL" id="GU056176">
    <property type="protein sequence ID" value="ADD83109.1"/>
    <property type="molecule type" value="mRNA"/>
</dbReference>
<dbReference type="EMBL" id="AC015914">
    <property type="status" value="NOT_ANNOTATED_CDS"/>
    <property type="molecule type" value="Genomic_DNA"/>
</dbReference>
<dbReference type="EMBL" id="AC021541">
    <property type="status" value="NOT_ANNOTATED_CDS"/>
    <property type="molecule type" value="Genomic_DNA"/>
</dbReference>
<dbReference type="EMBL" id="BC114506">
    <property type="protein sequence ID" value="AAI14507.1"/>
    <property type="molecule type" value="mRNA"/>
</dbReference>
<dbReference type="CCDS" id="CCDS10188.1">
    <molecule id="Q9UIK4-1"/>
</dbReference>
<dbReference type="CCDS" id="CCDS86463.1">
    <molecule id="Q9UIK4-2"/>
</dbReference>
<dbReference type="RefSeq" id="NP_001350659.1">
    <molecule id="Q9UIK4-2"/>
    <property type="nucleotide sequence ID" value="NM_001363730.2"/>
</dbReference>
<dbReference type="RefSeq" id="NP_055141.2">
    <molecule id="Q9UIK4-1"/>
    <property type="nucleotide sequence ID" value="NM_014326.3"/>
</dbReference>
<dbReference type="RefSeq" id="XP_011519718.1">
    <property type="nucleotide sequence ID" value="XM_011521416.2"/>
</dbReference>
<dbReference type="PDB" id="1WMK">
    <property type="method" value="X-ray"/>
    <property type="resolution" value="3.60 A"/>
    <property type="chains" value="A/B/C/D/E/F/G/H=11-330"/>
</dbReference>
<dbReference type="PDB" id="1WRZ">
    <property type="method" value="X-ray"/>
    <property type="resolution" value="2.00 A"/>
    <property type="chains" value="B=312-330"/>
</dbReference>
<dbReference type="PDB" id="1Z9X">
    <property type="method" value="X-ray"/>
    <property type="resolution" value="3.93 A"/>
    <property type="chains" value="A/B/C=11-330"/>
</dbReference>
<dbReference type="PDB" id="1ZUZ">
    <property type="method" value="X-ray"/>
    <property type="resolution" value="1.91 A"/>
    <property type="chains" value="B=312-330"/>
</dbReference>
<dbReference type="PDB" id="1ZWS">
    <property type="method" value="X-ray"/>
    <property type="resolution" value="2.90 A"/>
    <property type="chains" value="A/B/C/D/E/F/G/H=11-297"/>
</dbReference>
<dbReference type="PDB" id="2A27">
    <property type="method" value="X-ray"/>
    <property type="resolution" value="3.00 A"/>
    <property type="chains" value="A/B/C/D/E/F/G/H=11-330"/>
</dbReference>
<dbReference type="PDB" id="2A2A">
    <property type="method" value="X-ray"/>
    <property type="resolution" value="1.47 A"/>
    <property type="chains" value="A/B/C/D=11-330"/>
</dbReference>
<dbReference type="PDB" id="2CKE">
    <property type="method" value="X-ray"/>
    <property type="resolution" value="2.80 A"/>
    <property type="chains" value="A/B/C/D=11-330"/>
</dbReference>
<dbReference type="PDB" id="6PAW">
    <property type="method" value="X-ray"/>
    <property type="resolution" value="2.95 A"/>
    <property type="chains" value="A/B/E/F=12-330"/>
</dbReference>
<dbReference type="PDB" id="7A6R">
    <property type="method" value="X-ray"/>
    <property type="resolution" value="2.70 A"/>
    <property type="chains" value="E/F/G/L=364-370"/>
</dbReference>
<dbReference type="PDB" id="7A6Y">
    <property type="method" value="X-ray"/>
    <property type="resolution" value="2.50 A"/>
    <property type="chains" value="J/K/L/M=364-370"/>
</dbReference>
<dbReference type="PDBsum" id="1WMK"/>
<dbReference type="PDBsum" id="1WRZ"/>
<dbReference type="PDBsum" id="1Z9X"/>
<dbReference type="PDBsum" id="1ZUZ"/>
<dbReference type="PDBsum" id="1ZWS"/>
<dbReference type="PDBsum" id="2A27"/>
<dbReference type="PDBsum" id="2A2A"/>
<dbReference type="PDBsum" id="2CKE"/>
<dbReference type="PDBsum" id="6PAW"/>
<dbReference type="PDBsum" id="7A6R"/>
<dbReference type="PDBsum" id="7A6Y"/>
<dbReference type="SMR" id="Q9UIK4"/>
<dbReference type="BioGRID" id="117137">
    <property type="interactions" value="19"/>
</dbReference>
<dbReference type="FunCoup" id="Q9UIK4">
    <property type="interactions" value="995"/>
</dbReference>
<dbReference type="IntAct" id="Q9UIK4">
    <property type="interactions" value="12"/>
</dbReference>
<dbReference type="STRING" id="9606.ENSP00000484390"/>
<dbReference type="BindingDB" id="Q9UIK4"/>
<dbReference type="ChEMBL" id="CHEMBL3123"/>
<dbReference type="DrugBank" id="DB12010">
    <property type="generic name" value="Fostamatinib"/>
</dbReference>
<dbReference type="DrugCentral" id="Q9UIK4"/>
<dbReference type="iPTMnet" id="Q9UIK4"/>
<dbReference type="PhosphoSitePlus" id="Q9UIK4"/>
<dbReference type="BioMuta" id="DAPK2"/>
<dbReference type="DMDM" id="38605084"/>
<dbReference type="jPOST" id="Q9UIK4"/>
<dbReference type="MassIVE" id="Q9UIK4"/>
<dbReference type="PaxDb" id="9606-ENSP00000261891"/>
<dbReference type="PeptideAtlas" id="Q9UIK4"/>
<dbReference type="ProteomicsDB" id="19027"/>
<dbReference type="ProteomicsDB" id="84537">
    <molecule id="Q9UIK4-1"/>
</dbReference>
<dbReference type="ProteomicsDB" id="84538">
    <molecule id="Q9UIK4-2"/>
</dbReference>
<dbReference type="Antibodypedia" id="13340">
    <property type="antibodies" value="631 antibodies from 41 providers"/>
</dbReference>
<dbReference type="DNASU" id="23604"/>
<dbReference type="Ensembl" id="ENST00000261891.7">
    <molecule id="Q9UIK4-1"/>
    <property type="protein sequence ID" value="ENSP00000261891.3"/>
    <property type="gene ID" value="ENSG00000035664.11"/>
</dbReference>
<dbReference type="Ensembl" id="ENST00000457488.6">
    <molecule id="Q9UIK4-1"/>
    <property type="protein sequence ID" value="ENSP00000408277.1"/>
    <property type="gene ID" value="ENSG00000035664.11"/>
</dbReference>
<dbReference type="Ensembl" id="ENST00000558069.5">
    <molecule id="Q9UIK4-2"/>
    <property type="protein sequence ID" value="ENSP00000453235.1"/>
    <property type="gene ID" value="ENSG00000035664.11"/>
</dbReference>
<dbReference type="Ensembl" id="ENST00000612884.4">
    <molecule id="Q9UIK4-2"/>
    <property type="protein sequence ID" value="ENSP00000484390.1"/>
    <property type="gene ID" value="ENSG00000035664.11"/>
</dbReference>
<dbReference type="GeneID" id="23604"/>
<dbReference type="KEGG" id="hsa:23604"/>
<dbReference type="MANE-Select" id="ENST00000457488.6">
    <property type="protein sequence ID" value="ENSP00000408277.1"/>
    <property type="RefSeq nucleotide sequence ID" value="NM_014326.5"/>
    <property type="RefSeq protein sequence ID" value="NP_055141.2"/>
</dbReference>
<dbReference type="UCSC" id="uc002amr.4">
    <molecule id="Q9UIK4-1"/>
    <property type="organism name" value="human"/>
</dbReference>
<dbReference type="AGR" id="HGNC:2675"/>
<dbReference type="CTD" id="23604"/>
<dbReference type="DisGeNET" id="23604"/>
<dbReference type="GeneCards" id="DAPK2"/>
<dbReference type="HGNC" id="HGNC:2675">
    <property type="gene designation" value="DAPK2"/>
</dbReference>
<dbReference type="HPA" id="ENSG00000035664">
    <property type="expression patterns" value="Tissue enhanced (skeletal muscle, thyroid gland)"/>
</dbReference>
<dbReference type="MIM" id="616567">
    <property type="type" value="gene"/>
</dbReference>
<dbReference type="neXtProt" id="NX_Q9UIK4"/>
<dbReference type="OpenTargets" id="ENSG00000035664"/>
<dbReference type="PharmGKB" id="PA27143"/>
<dbReference type="VEuPathDB" id="HostDB:ENSG00000035664"/>
<dbReference type="eggNOG" id="KOG0032">
    <property type="taxonomic scope" value="Eukaryota"/>
</dbReference>
<dbReference type="GeneTree" id="ENSGT00940000153424"/>
<dbReference type="HOGENOM" id="CLU_000288_63_0_1"/>
<dbReference type="InParanoid" id="Q9UIK4"/>
<dbReference type="OMA" id="PWITSGC"/>
<dbReference type="OrthoDB" id="74764at2759"/>
<dbReference type="PAN-GO" id="Q9UIK4">
    <property type="GO annotations" value="5 GO annotations based on evolutionary models"/>
</dbReference>
<dbReference type="PhylomeDB" id="Q9UIK4"/>
<dbReference type="TreeFam" id="TF314166"/>
<dbReference type="PathwayCommons" id="Q9UIK4"/>
<dbReference type="Reactome" id="R-HSA-418889">
    <property type="pathway name" value="Caspase activation via Dependence Receptors in the absence of ligand"/>
</dbReference>
<dbReference type="SignaLink" id="Q9UIK4"/>
<dbReference type="SIGNOR" id="Q9UIK4"/>
<dbReference type="BioGRID-ORCS" id="23604">
    <property type="hits" value="12 hits in 1186 CRISPR screens"/>
</dbReference>
<dbReference type="ChiTaRS" id="DAPK2">
    <property type="organism name" value="human"/>
</dbReference>
<dbReference type="EvolutionaryTrace" id="Q9UIK4"/>
<dbReference type="GeneWiki" id="DAPK2"/>
<dbReference type="GenomeRNAi" id="23604"/>
<dbReference type="Pharos" id="Q9UIK4">
    <property type="development level" value="Tchem"/>
</dbReference>
<dbReference type="PRO" id="PR:Q9UIK4"/>
<dbReference type="Proteomes" id="UP000005640">
    <property type="component" value="Chromosome 15"/>
</dbReference>
<dbReference type="RNAct" id="Q9UIK4">
    <property type="molecule type" value="protein"/>
</dbReference>
<dbReference type="Bgee" id="ENSG00000035664">
    <property type="expression patterns" value="Expressed in right lobe of thyroid gland and 179 other cell types or tissues"/>
</dbReference>
<dbReference type="ExpressionAtlas" id="Q9UIK4">
    <property type="expression patterns" value="baseline and differential"/>
</dbReference>
<dbReference type="GO" id="GO:0034423">
    <property type="term" value="C:autophagosome lumen"/>
    <property type="evidence" value="ECO:0007669"/>
    <property type="project" value="UniProtKB-SubCell"/>
</dbReference>
<dbReference type="GO" id="GO:0005737">
    <property type="term" value="C:cytoplasm"/>
    <property type="evidence" value="ECO:0000314"/>
    <property type="project" value="UniProtKB"/>
</dbReference>
<dbReference type="GO" id="GO:0031410">
    <property type="term" value="C:cytoplasmic vesicle"/>
    <property type="evidence" value="ECO:0007669"/>
    <property type="project" value="UniProtKB-KW"/>
</dbReference>
<dbReference type="GO" id="GO:0005794">
    <property type="term" value="C:Golgi apparatus"/>
    <property type="evidence" value="ECO:0000314"/>
    <property type="project" value="HPA"/>
</dbReference>
<dbReference type="GO" id="GO:0043231">
    <property type="term" value="C:intracellular membrane-bounded organelle"/>
    <property type="evidence" value="ECO:0000314"/>
    <property type="project" value="HPA"/>
</dbReference>
<dbReference type="GO" id="GO:0005634">
    <property type="term" value="C:nucleus"/>
    <property type="evidence" value="ECO:0000318"/>
    <property type="project" value="GO_Central"/>
</dbReference>
<dbReference type="GO" id="GO:0005524">
    <property type="term" value="F:ATP binding"/>
    <property type="evidence" value="ECO:0000314"/>
    <property type="project" value="UniProtKB"/>
</dbReference>
<dbReference type="GO" id="GO:0005516">
    <property type="term" value="F:calmodulin binding"/>
    <property type="evidence" value="ECO:0000314"/>
    <property type="project" value="UniProtKB"/>
</dbReference>
<dbReference type="GO" id="GO:0042802">
    <property type="term" value="F:identical protein binding"/>
    <property type="evidence" value="ECO:0000353"/>
    <property type="project" value="IntAct"/>
</dbReference>
<dbReference type="GO" id="GO:0106310">
    <property type="term" value="F:protein serine kinase activity"/>
    <property type="evidence" value="ECO:0007669"/>
    <property type="project" value="RHEA"/>
</dbReference>
<dbReference type="GO" id="GO:0004674">
    <property type="term" value="F:protein serine/threonine kinase activity"/>
    <property type="evidence" value="ECO:0000318"/>
    <property type="project" value="GO_Central"/>
</dbReference>
<dbReference type="GO" id="GO:0043276">
    <property type="term" value="P:anoikis"/>
    <property type="evidence" value="ECO:0000315"/>
    <property type="project" value="UniProtKB"/>
</dbReference>
<dbReference type="GO" id="GO:0006915">
    <property type="term" value="P:apoptotic process"/>
    <property type="evidence" value="ECO:0000304"/>
    <property type="project" value="UniProtKB"/>
</dbReference>
<dbReference type="GO" id="GO:0035556">
    <property type="term" value="P:intracellular signal transduction"/>
    <property type="evidence" value="ECO:0000314"/>
    <property type="project" value="UniProtKB"/>
</dbReference>
<dbReference type="GO" id="GO:1990266">
    <property type="term" value="P:neutrophil migration"/>
    <property type="evidence" value="ECO:0007669"/>
    <property type="project" value="Ensembl"/>
</dbReference>
<dbReference type="GO" id="GO:0043065">
    <property type="term" value="P:positive regulation of apoptotic process"/>
    <property type="evidence" value="ECO:0000318"/>
    <property type="project" value="GO_Central"/>
</dbReference>
<dbReference type="GO" id="GO:2000424">
    <property type="term" value="P:positive regulation of eosinophil chemotaxis"/>
    <property type="evidence" value="ECO:0000315"/>
    <property type="project" value="UniProtKB"/>
</dbReference>
<dbReference type="GO" id="GO:0090023">
    <property type="term" value="P:positive regulation of neutrophil chemotaxis"/>
    <property type="evidence" value="ECO:0000315"/>
    <property type="project" value="UniProtKB"/>
</dbReference>
<dbReference type="GO" id="GO:0046777">
    <property type="term" value="P:protein autophosphorylation"/>
    <property type="evidence" value="ECO:0000304"/>
    <property type="project" value="UniProtKB"/>
</dbReference>
<dbReference type="GO" id="GO:0006468">
    <property type="term" value="P:protein phosphorylation"/>
    <property type="evidence" value="ECO:0000314"/>
    <property type="project" value="UniProtKB"/>
</dbReference>
<dbReference type="GO" id="GO:0042981">
    <property type="term" value="P:regulation of apoptotic process"/>
    <property type="evidence" value="ECO:0000304"/>
    <property type="project" value="UniProtKB"/>
</dbReference>
<dbReference type="GO" id="GO:0010506">
    <property type="term" value="P:regulation of autophagy"/>
    <property type="evidence" value="ECO:0000304"/>
    <property type="project" value="UniProtKB"/>
</dbReference>
<dbReference type="GO" id="GO:2001242">
    <property type="term" value="P:regulation of intrinsic apoptotic signaling pathway"/>
    <property type="evidence" value="ECO:0000315"/>
    <property type="project" value="UniProtKB"/>
</dbReference>
<dbReference type="CDD" id="cd14196">
    <property type="entry name" value="STKc_DAPK2"/>
    <property type="match status" value="1"/>
</dbReference>
<dbReference type="FunFam" id="3.30.200.20:FF:000110">
    <property type="entry name" value="Death-associated kinase 3, isoform CRA_a"/>
    <property type="match status" value="1"/>
</dbReference>
<dbReference type="FunFam" id="1.20.5.460:FF:000004">
    <property type="entry name" value="Death-associated protein kinase 2"/>
    <property type="match status" value="1"/>
</dbReference>
<dbReference type="FunFam" id="1.10.510.10:FF:000250">
    <property type="entry name" value="Death-associated protein kinase 3"/>
    <property type="match status" value="1"/>
</dbReference>
<dbReference type="Gene3D" id="3.30.200.20">
    <property type="entry name" value="Phosphorylase Kinase, domain 1"/>
    <property type="match status" value="1"/>
</dbReference>
<dbReference type="Gene3D" id="1.20.5.460">
    <property type="entry name" value="Single helix bin"/>
    <property type="match status" value="1"/>
</dbReference>
<dbReference type="Gene3D" id="1.10.510.10">
    <property type="entry name" value="Transferase(Phosphotransferase) domain 1"/>
    <property type="match status" value="1"/>
</dbReference>
<dbReference type="InterPro" id="IPR011009">
    <property type="entry name" value="Kinase-like_dom_sf"/>
</dbReference>
<dbReference type="InterPro" id="IPR000719">
    <property type="entry name" value="Prot_kinase_dom"/>
</dbReference>
<dbReference type="InterPro" id="IPR017441">
    <property type="entry name" value="Protein_kinase_ATP_BS"/>
</dbReference>
<dbReference type="InterPro" id="IPR008271">
    <property type="entry name" value="Ser/Thr_kinase_AS"/>
</dbReference>
<dbReference type="PANTHER" id="PTHR24342:SF15">
    <property type="entry name" value="DEATH-ASSOCIATED PROTEIN KINASE 2"/>
    <property type="match status" value="1"/>
</dbReference>
<dbReference type="PANTHER" id="PTHR24342">
    <property type="entry name" value="SERINE/THREONINE-PROTEIN KINASE 17"/>
    <property type="match status" value="1"/>
</dbReference>
<dbReference type="Pfam" id="PF00069">
    <property type="entry name" value="Pkinase"/>
    <property type="match status" value="1"/>
</dbReference>
<dbReference type="SMART" id="SM00220">
    <property type="entry name" value="S_TKc"/>
    <property type="match status" value="1"/>
</dbReference>
<dbReference type="SUPFAM" id="SSF56112">
    <property type="entry name" value="Protein kinase-like (PK-like)"/>
    <property type="match status" value="1"/>
</dbReference>
<dbReference type="PROSITE" id="PS00107">
    <property type="entry name" value="PROTEIN_KINASE_ATP"/>
    <property type="match status" value="1"/>
</dbReference>
<dbReference type="PROSITE" id="PS50011">
    <property type="entry name" value="PROTEIN_KINASE_DOM"/>
    <property type="match status" value="1"/>
</dbReference>
<dbReference type="PROSITE" id="PS00108">
    <property type="entry name" value="PROTEIN_KINASE_ST"/>
    <property type="match status" value="1"/>
</dbReference>
<feature type="chain" id="PRO_0000085912" description="Death-associated protein kinase 2">
    <location>
        <begin position="1"/>
        <end position="370"/>
    </location>
</feature>
<feature type="domain" description="Protein kinase" evidence="2">
    <location>
        <begin position="23"/>
        <end position="285"/>
    </location>
</feature>
<feature type="region of interest" description="Calmodulin-binding">
    <location>
        <begin position="277"/>
        <end position="344"/>
    </location>
</feature>
<feature type="region of interest" description="Autoinhibitory domain" evidence="1">
    <location>
        <begin position="292"/>
        <end position="301"/>
    </location>
</feature>
<feature type="region of interest" description="Disordered" evidence="4">
    <location>
        <begin position="348"/>
        <end position="370"/>
    </location>
</feature>
<feature type="compositionally biased region" description="Basic residues" evidence="4">
    <location>
        <begin position="358"/>
        <end position="370"/>
    </location>
</feature>
<feature type="active site" description="Proton acceptor" evidence="2 3">
    <location>
        <position position="149"/>
    </location>
</feature>
<feature type="binding site" evidence="2">
    <location>
        <begin position="29"/>
        <end position="37"/>
    </location>
    <ligand>
        <name>ATP</name>
        <dbReference type="ChEBI" id="CHEBI:30616"/>
    </ligand>
</feature>
<feature type="binding site" evidence="2 5 6">
    <location>
        <position position="52"/>
    </location>
    <ligand>
        <name>ATP</name>
        <dbReference type="ChEBI" id="CHEBI:30616"/>
    </ligand>
</feature>
<feature type="modified residue" description="Phosphoserine" evidence="18">
    <location>
        <position position="299"/>
    </location>
</feature>
<feature type="modified residue" description="Phosphoserine; by autocatalysis" evidence="7">
    <location>
        <position position="318"/>
    </location>
</feature>
<feature type="modified residue" description="Phosphoserine" evidence="17 18">
    <location>
        <position position="349"/>
    </location>
</feature>
<feature type="modified residue" description="Phosphothreonine; by PKB/AKT1" evidence="12">
    <location>
        <position position="369"/>
    </location>
</feature>
<feature type="splice variant" id="VSP_042057" description="In isoform 2." evidence="13">
    <original>PVDNQQAMVRRESVVNLENFRKQYVRRRWKLSFSIVSLCNHLTRSLMKKVHLRPDEDLRNCESDTEEDIARRKALHPRRRSSTS</original>
    <variation>SKGEGRAPEQRKTEPTQLKTKHLREYTLKCHSSMPPNNSYVNFERFACVVEDVARVDLGCRALVEAHDTIQDDVEALVSIFNEKEAWYREENESARHDLSQLRYEFRKVESLKKLLREDIQATGCSLGSMARKLDHLQAQFEILRQELSADLQWIQELVGSFQLESGSSEGLGSTFYQDTSESLSELLSRSCTEEFLAGWKL</variation>
    <location>
        <begin position="287"/>
        <end position="370"/>
    </location>
</feature>
<feature type="sequence variant" id="VAR_040436" description="In dbSNP:rs56047843." evidence="8">
    <original>R</original>
    <variation>W</variation>
    <location>
        <position position="60"/>
    </location>
</feature>
<feature type="sequence variant" id="VAR_040437" description="In dbSNP:rs34270163." evidence="8">
    <original>R</original>
    <variation>W</variation>
    <location>
        <position position="271"/>
    </location>
</feature>
<feature type="mutagenesis site" description="Loss of activity, apoptotic function and of autophosphorylation." evidence="5 6 7">
    <original>K</original>
    <variation>A</variation>
    <location>
        <position position="52"/>
    </location>
</feature>
<feature type="mutagenesis site" description="Loss of ca(2+)-calmodulin binding, increase in activity, loss of autophosphorylation.">
    <location>
        <begin position="299"/>
        <end position="330"/>
    </location>
</feature>
<feature type="mutagenesis site" description="No effect on Ca(2+)-calmodulin independent phosphorylation or apoptotic activity." evidence="7">
    <original>S</original>
    <variation>A</variation>
    <location>
        <position position="299"/>
    </location>
</feature>
<feature type="mutagenesis site" description="Loss of Ca(2+)-calmodulin independent phosphorylation, increase in apoptotic activity." evidence="7">
    <original>S</original>
    <variation>A</variation>
    <location>
        <position position="318"/>
    </location>
</feature>
<feature type="mutagenesis site" description="Abolishes apoptotic activity." evidence="7">
    <original>S</original>
    <variation>D</variation>
    <location>
        <position position="318"/>
    </location>
</feature>
<feature type="mutagenesis site" description="No effect on Ca(2+)-calmodulin independent phosphorylation or apoptotic activity." evidence="7">
    <original>S</original>
    <variation>A</variation>
    <location>
        <position position="320"/>
    </location>
</feature>
<feature type="mutagenesis site" description="No effect on Ca(2+)-calmodulin independent phosphorylation or apoptotic activity." evidence="7">
    <original>S</original>
    <variation>A</variation>
    <location>
        <position position="323"/>
    </location>
</feature>
<feature type="mutagenesis site" description="No effect on Ca(2+)-calmodulin independent phosphorylation or apoptotic activity." evidence="7">
    <original>T</original>
    <variation>A</variation>
    <location>
        <position position="329"/>
    </location>
</feature>
<feature type="mutagenesis site" description="No effect on interaction with YWHAE." evidence="12">
    <original>S</original>
    <variation>A</variation>
    <location>
        <position position="367"/>
    </location>
</feature>
<feature type="mutagenesis site" description="No effect on interaction with YWHAE." evidence="12">
    <original>S</original>
    <variation>A</variation>
    <location>
        <position position="368"/>
    </location>
</feature>
<feature type="mutagenesis site" description="Interaction with YWHAE is reduced." evidence="12">
    <original>T</original>
    <variation>A</variation>
    <location>
        <position position="369"/>
    </location>
</feature>
<feature type="mutagenesis site" description="Interaction with YWHAE is increased." evidence="12">
    <original>S</original>
    <variation>A</variation>
    <location>
        <position position="370"/>
    </location>
</feature>
<feature type="sequence conflict" description="In Ref. 2; AAC35001." evidence="14" ref="2">
    <original>A</original>
    <variation>S</variation>
    <location>
        <position position="241"/>
    </location>
</feature>
<feature type="sequence conflict" description="In Ref. 2; AAC35001." evidence="14" ref="2">
    <original>Q</original>
    <variation>H</variation>
    <location>
        <position position="253"/>
    </location>
</feature>
<feature type="helix" evidence="21">
    <location>
        <begin position="19"/>
        <end position="22"/>
    </location>
</feature>
<feature type="strand" evidence="21">
    <location>
        <begin position="23"/>
        <end position="31"/>
    </location>
</feature>
<feature type="strand" evidence="21">
    <location>
        <begin position="33"/>
        <end position="42"/>
    </location>
</feature>
<feature type="turn" evidence="21">
    <location>
        <begin position="43"/>
        <end position="45"/>
    </location>
</feature>
<feature type="strand" evidence="21">
    <location>
        <begin position="48"/>
        <end position="56"/>
    </location>
</feature>
<feature type="strand" evidence="21">
    <location>
        <begin position="58"/>
        <end position="61"/>
    </location>
</feature>
<feature type="strand" evidence="21">
    <location>
        <begin position="63"/>
        <end position="66"/>
    </location>
</feature>
<feature type="helix" evidence="21">
    <location>
        <begin position="68"/>
        <end position="80"/>
    </location>
</feature>
<feature type="strand" evidence="21">
    <location>
        <begin position="89"/>
        <end position="94"/>
    </location>
</feature>
<feature type="strand" evidence="21">
    <location>
        <begin position="96"/>
        <end position="103"/>
    </location>
</feature>
<feature type="helix" evidence="21">
    <location>
        <begin position="111"/>
        <end position="116"/>
    </location>
</feature>
<feature type="helix" evidence="21">
    <location>
        <begin position="123"/>
        <end position="142"/>
    </location>
</feature>
<feature type="strand" evidence="20">
    <location>
        <begin position="144"/>
        <end position="146"/>
    </location>
</feature>
<feature type="helix" evidence="21">
    <location>
        <begin position="152"/>
        <end position="154"/>
    </location>
</feature>
<feature type="strand" evidence="21">
    <location>
        <begin position="155"/>
        <end position="158"/>
    </location>
</feature>
<feature type="strand" evidence="21">
    <location>
        <begin position="162"/>
        <end position="164"/>
    </location>
</feature>
<feature type="strand" evidence="21">
    <location>
        <begin position="167"/>
        <end position="169"/>
    </location>
</feature>
<feature type="helix" evidence="21">
    <location>
        <begin position="191"/>
        <end position="193"/>
    </location>
</feature>
<feature type="helix" evidence="21">
    <location>
        <begin position="196"/>
        <end position="199"/>
    </location>
</feature>
<feature type="helix" evidence="21">
    <location>
        <begin position="207"/>
        <end position="222"/>
    </location>
</feature>
<feature type="helix" evidence="21">
    <location>
        <begin position="232"/>
        <end position="240"/>
    </location>
</feature>
<feature type="helix" evidence="21">
    <location>
        <begin position="248"/>
        <end position="251"/>
    </location>
</feature>
<feature type="helix" evidence="21">
    <location>
        <begin position="256"/>
        <end position="263"/>
    </location>
</feature>
<feature type="turn" evidence="21">
    <location>
        <begin position="270"/>
        <end position="272"/>
    </location>
</feature>
<feature type="helix" evidence="21">
    <location>
        <begin position="276"/>
        <end position="281"/>
    </location>
</feature>
<feature type="turn" evidence="21">
    <location>
        <begin position="283"/>
        <end position="285"/>
    </location>
</feature>
<feature type="helix" evidence="21">
    <location>
        <begin position="290"/>
        <end position="298"/>
    </location>
</feature>
<feature type="helix" evidence="21">
    <location>
        <begin position="303"/>
        <end position="312"/>
    </location>
</feature>
<feature type="helix" evidence="19">
    <location>
        <begin position="314"/>
        <end position="328"/>
    </location>
</feature>
<feature type="region of interest" description="Leucine-zipper" evidence="14">
    <location sequence="Q9UIK4-2">
        <begin position="434"/>
        <end position="451"/>
    </location>
</feature>
<proteinExistence type="evidence at protein level"/>
<organism evidence="16">
    <name type="scientific">Homo sapiens</name>
    <name type="common">Human</name>
    <dbReference type="NCBI Taxonomy" id="9606"/>
    <lineage>
        <taxon>Eukaryota</taxon>
        <taxon>Metazoa</taxon>
        <taxon>Chordata</taxon>
        <taxon>Craniata</taxon>
        <taxon>Vertebrata</taxon>
        <taxon>Euteleostomi</taxon>
        <taxon>Mammalia</taxon>
        <taxon>Eutheria</taxon>
        <taxon>Euarchontoglires</taxon>
        <taxon>Primates</taxon>
        <taxon>Haplorrhini</taxon>
        <taxon>Catarrhini</taxon>
        <taxon>Hominidae</taxon>
        <taxon>Homo</taxon>
    </lineage>
</organism>
<comment type="function">
    <text evidence="9 11 12">Calcium/calmodulin-dependent serine/threonine kinase involved in multiple cellular signaling pathways that trigger cell survival, apoptosis, and autophagy. Regulates both type I apoptotic and type II autophagic cell death signals, depending on the cellular setting. The former is caspase-dependent, while the latter is caspase-independent and is characterized by the accumulation of autophagic vesicles. Acts as a mediator of anoikis and a suppressor of beta-catenin-dependent anchorage-independent growth of malignant epithelial cells. May play a role in granulocytic maturation (PubMed:17347302). Regulates granulocytic motility by controlling cell spreading and polarization (PubMed:24163421).</text>
</comment>
<comment type="function">
    <text>Isoform 2 is not regulated by calmodulin. It can phosphorylate MYL9. It can induce membrane blebbing and autophagic cell death.</text>
</comment>
<comment type="catalytic activity">
    <reaction evidence="5 12">
        <text>L-seryl-[protein] + ATP = O-phospho-L-seryl-[protein] + ADP + H(+)</text>
        <dbReference type="Rhea" id="RHEA:17989"/>
        <dbReference type="Rhea" id="RHEA-COMP:9863"/>
        <dbReference type="Rhea" id="RHEA-COMP:11604"/>
        <dbReference type="ChEBI" id="CHEBI:15378"/>
        <dbReference type="ChEBI" id="CHEBI:29999"/>
        <dbReference type="ChEBI" id="CHEBI:30616"/>
        <dbReference type="ChEBI" id="CHEBI:83421"/>
        <dbReference type="ChEBI" id="CHEBI:456216"/>
        <dbReference type="EC" id="2.7.11.1"/>
    </reaction>
</comment>
<comment type="catalytic activity">
    <reaction evidence="5 12">
        <text>L-threonyl-[protein] + ATP = O-phospho-L-threonyl-[protein] + ADP + H(+)</text>
        <dbReference type="Rhea" id="RHEA:46608"/>
        <dbReference type="Rhea" id="RHEA-COMP:11060"/>
        <dbReference type="Rhea" id="RHEA-COMP:11605"/>
        <dbReference type="ChEBI" id="CHEBI:15378"/>
        <dbReference type="ChEBI" id="CHEBI:30013"/>
        <dbReference type="ChEBI" id="CHEBI:30616"/>
        <dbReference type="ChEBI" id="CHEBI:61977"/>
        <dbReference type="ChEBI" id="CHEBI:456216"/>
        <dbReference type="EC" id="2.7.11.1"/>
    </reaction>
</comment>
<comment type="cofactor">
    <cofactor evidence="5 6 7">
        <name>Mg(2+)</name>
        <dbReference type="ChEBI" id="CHEBI:18420"/>
    </cofactor>
</comment>
<comment type="activity regulation">
    <text evidence="5">Activated by Ca(2+)/calmodulin. Regulated by a double locking mechanism, involving autophosphorylation at Ser-318, calmodulin binding, and dimerization. In the inactive state, Ser-318 is phosphorylated, and the kinase is dimeric. Activation involves: dephosphorylation at Ser-318, release-of-autoinhibition mechanism where calmodulin binding induces a conformational change that relieves the steric block of the active site by the autoinhibitory domain, and generation of the monomeric active form of the kinase.</text>
</comment>
<comment type="subunit">
    <text evidence="1 12">Homodimer in its autoinhibited state. Active as monomer (By similarity). Isoform 2 but not isoform 1 can interact with ATF4. Interacts with 14-3-3 proteins YWHAB, YWHAE, YWHAG, YWHAH, YWHAQ, YWHAZ and SFN; the interaction requires DAPK2 phosphorylation at Thr-369 and suppresses DAPK2 kinase activity and DAPK2-induced apoptosis (PubMed:26047703).</text>
</comment>
<comment type="interaction">
    <interactant intactId="EBI-77154">
        <id>Q9UIK4</id>
    </interactant>
    <interactant intactId="EBI-12012082">
        <id>Q7Z6B0-2</id>
        <label>CCDC91</label>
    </interactant>
    <organismsDiffer>false</organismsDiffer>
    <experiments>3</experiments>
</comment>
<comment type="interaction">
    <interactant intactId="EBI-77154">
        <id>Q9UIK4</id>
    </interactant>
    <interactant intactId="EBI-77154">
        <id>Q9UIK4</id>
        <label>DAPK2</label>
    </interactant>
    <organismsDiffer>false</organismsDiffer>
    <experiments>4</experiments>
</comment>
<comment type="interaction">
    <interactant intactId="EBI-77154">
        <id>Q9UIK4</id>
    </interactant>
    <interactant intactId="EBI-10175124">
        <id>Q8IZU0</id>
        <label>FAM9B</label>
    </interactant>
    <organismsDiffer>false</organismsDiffer>
    <experiments>4</experiments>
</comment>
<comment type="interaction">
    <interactant intactId="EBI-77154">
        <id>Q9UIK4</id>
    </interactant>
    <interactant intactId="EBI-356498">
        <id>P62258</id>
        <label>YWHAE</label>
    </interactant>
    <organismsDiffer>false</organismsDiffer>
    <experiments>2</experiments>
</comment>
<comment type="interaction">
    <interactant intactId="EBI-9693115">
        <id>Q9UIK4-2</id>
    </interactant>
    <interactant intactId="EBI-492498">
        <id>P18848</id>
        <label>ATF4</label>
    </interactant>
    <organismsDiffer>false</organismsDiffer>
    <experiments>2</experiments>
</comment>
<comment type="subcellular location">
    <subcellularLocation>
        <location>Cytoplasm</location>
    </subcellularLocation>
    <subcellularLocation>
        <location>Cytoplasmic vesicle</location>
        <location>Autophagosome lumen</location>
    </subcellularLocation>
</comment>
<comment type="alternative products">
    <event type="alternative splicing"/>
    <isoform>
        <id>Q9UIK4-1</id>
        <name>1</name>
        <name>Alpha</name>
        <sequence type="displayed"/>
    </isoform>
    <isoform>
        <id>Q9UIK4-2</id>
        <name>2</name>
        <name>Beta</name>
        <sequence type="described" ref="VSP_042057"/>
    </isoform>
</comment>
<comment type="tissue specificity">
    <text evidence="5 9 10 11">Expressed in neutrophils and eosinophils (PubMed:24163421). Isoform 2 is expressed in embryonic stem cells (at protein level). Isoform 1 is ubiquitously expressed in all tissue types examined with high levels in heart, lung and skeletal muscle.</text>
</comment>
<comment type="induction">
    <text evidence="9 11">Up-regulated during granulocytic maturation (PubMed:17347302, PubMed:24163421).</text>
</comment>
<comment type="domain">
    <text evidence="1">The autoinhibitory domain sterically blocks the substrate peptide-binding site by making both hydrophobic and electrostatic contacts with the kinase core.</text>
</comment>
<comment type="PTM">
    <text evidence="7">Autophosphorylation at Ser-318 inhibits its catalytic activity. Dephosphorylated at Ser-318 in response to activated Fas and TNF-alpha receptors.</text>
</comment>
<comment type="similarity">
    <text evidence="14">Belongs to the protein kinase superfamily. CAMK Ser/Thr protein kinase family. DAP kinase subfamily.</text>
</comment>
<keyword id="KW-0002">3D-structure</keyword>
<keyword id="KW-0025">Alternative splicing</keyword>
<keyword id="KW-0053">Apoptosis</keyword>
<keyword id="KW-0067">ATP-binding</keyword>
<keyword id="KW-0112">Calmodulin-binding</keyword>
<keyword id="KW-0963">Cytoplasm</keyword>
<keyword id="KW-0968">Cytoplasmic vesicle</keyword>
<keyword id="KW-0418">Kinase</keyword>
<keyword id="KW-0547">Nucleotide-binding</keyword>
<keyword id="KW-0597">Phosphoprotein</keyword>
<keyword id="KW-1267">Proteomics identification</keyword>
<keyword id="KW-1185">Reference proteome</keyword>
<keyword id="KW-0723">Serine/threonine-protein kinase</keyword>
<keyword id="KW-0808">Transferase</keyword>
<accession>Q9UIK4</accession>
<accession>E9JGM7</accession>
<accession>O75892</accession>
<accession>Q24JS1</accession>
<sequence length="370" mass="42898">MFQASMRSPNMEPFKQQKVEDFYDIGEELGSGQFAIVKKCREKSTGLEYAAKFIKKRQSRASRRGVSREEIEREVSILRQVLHHNVITLHDVYENRTDVVLILELVSGGELFDFLAQKESLSEEEATSFIKQILDGVNYLHTKKIAHFDLKPENIMLLDKNIPIPHIKLIDFGLAHEIEDGVEFKNIFGTPEFVAPEIVNYEPLGLEADMWSIGVITYILLSGASPFLGDTKQETLANITAVSYDFDEEFFSQTSELAKDFIRKLLVKETRKRLTIQEALRHPWITPVDNQQAMVRRESVVNLENFRKQYVRRRWKLSFSIVSLCNHLTRSLMKKVHLRPDEDLRNCESDTEEDIARRKALHPRRRSSTS</sequence>
<evidence type="ECO:0000250" key="1"/>
<evidence type="ECO:0000255" key="2">
    <source>
        <dbReference type="PROSITE-ProRule" id="PRU00159"/>
    </source>
</evidence>
<evidence type="ECO:0000255" key="3">
    <source>
        <dbReference type="PROSITE-ProRule" id="PRU10027"/>
    </source>
</evidence>
<evidence type="ECO:0000256" key="4">
    <source>
        <dbReference type="SAM" id="MobiDB-lite"/>
    </source>
</evidence>
<evidence type="ECO:0000269" key="5">
    <source>
    </source>
</evidence>
<evidence type="ECO:0000269" key="6">
    <source>
    </source>
</evidence>
<evidence type="ECO:0000269" key="7">
    <source>
    </source>
</evidence>
<evidence type="ECO:0000269" key="8">
    <source>
    </source>
</evidence>
<evidence type="ECO:0000269" key="9">
    <source>
    </source>
</evidence>
<evidence type="ECO:0000269" key="10">
    <source>
    </source>
</evidence>
<evidence type="ECO:0000269" key="11">
    <source>
    </source>
</evidence>
<evidence type="ECO:0000269" key="12">
    <source>
    </source>
</evidence>
<evidence type="ECO:0000303" key="13">
    <source>
    </source>
</evidence>
<evidence type="ECO:0000305" key="14"/>
<evidence type="ECO:0000312" key="15">
    <source>
        <dbReference type="EMBL" id="AAC35001.1"/>
    </source>
</evidence>
<evidence type="ECO:0000312" key="16">
    <source>
        <dbReference type="EMBL" id="BAA88063.1"/>
    </source>
</evidence>
<evidence type="ECO:0007744" key="17">
    <source>
    </source>
</evidence>
<evidence type="ECO:0007744" key="18">
    <source>
    </source>
</evidence>
<evidence type="ECO:0007829" key="19">
    <source>
        <dbReference type="PDB" id="1ZUZ"/>
    </source>
</evidence>
<evidence type="ECO:0007829" key="20">
    <source>
        <dbReference type="PDB" id="1ZWS"/>
    </source>
</evidence>
<evidence type="ECO:0007829" key="21">
    <source>
        <dbReference type="PDB" id="2A2A"/>
    </source>
</evidence>
<reference evidence="14" key="1">
    <citation type="journal article" date="1999" name="Oncogene">
        <title>Death-associated protein kinase 2 is a new calcium/calmodulin-dependent protein kinase that signals apoptosis through its catalytic activity.</title>
        <authorList>
            <person name="Kawai T."/>
            <person name="Nomura F."/>
            <person name="Hoshino K."/>
            <person name="Copeland N.G."/>
            <person name="Gilbert D.J."/>
            <person name="Jenkins N.A."/>
            <person name="Akira S."/>
        </authorList>
    </citation>
    <scope>NUCLEOTIDE SEQUENCE [MRNA]</scope>
    <scope>FUNCTION</scope>
    <scope>ACTIVITY REGULATION</scope>
    <scope>TISSUE SPECIFICITY</scope>
    <scope>MUTAGENESIS OF LYS-52</scope>
    <scope>CATALYTIC ACTIVITY</scope>
    <source>
        <tissue evidence="5">Skeletal muscle</tissue>
    </source>
</reference>
<reference evidence="14" key="2">
    <citation type="journal article" date="2000" name="Mol. Cell. Biol.">
        <title>Death-associated protein kinase-related protein 1, a novel serine/threonine kinase involved in apoptosis.</title>
        <authorList>
            <person name="Inbal B."/>
            <person name="Shani G."/>
            <person name="Cohen O."/>
            <person name="Kissil J.L."/>
            <person name="Kimchi A."/>
        </authorList>
    </citation>
    <scope>NUCLEOTIDE SEQUENCE [MRNA]</scope>
    <scope>FUNCTION</scope>
    <scope>SUBCELLULAR LOCATION</scope>
    <scope>HOMODIMERIZATION</scope>
    <scope>MUTAGENESIS OF LYS-52</scope>
    <source>
        <tissue evidence="15">Kidney</tissue>
    </source>
</reference>
<reference key="3">
    <citation type="journal article" date="2011" name="PLoS ONE">
        <title>New modularity of DAP-kinases: alternative splicing of the DRP-1 gene produces a ZIPk-like isoform.</title>
        <authorList>
            <person name="Shoval Y."/>
            <person name="Berissi H."/>
            <person name="Kimchi A."/>
            <person name="Pietrokovski S."/>
        </authorList>
    </citation>
    <scope>NUCLEOTIDE SEQUENCE [MRNA] (ISOFORM 2)</scope>
    <scope>FUNCTION (ISOFORM 2)</scope>
    <scope>TISSUE SPECIFICITY</scope>
    <scope>INTERACTION WITH ATF4 (ISOFORM 2)</scope>
</reference>
<reference key="4">
    <citation type="journal article" date="2006" name="Nature">
        <title>Analysis of the DNA sequence and duplication history of human chromosome 15.</title>
        <authorList>
            <person name="Zody M.C."/>
            <person name="Garber M."/>
            <person name="Sharpe T."/>
            <person name="Young S.K."/>
            <person name="Rowen L."/>
            <person name="O'Neill K."/>
            <person name="Whittaker C.A."/>
            <person name="Kamal M."/>
            <person name="Chang J.L."/>
            <person name="Cuomo C.A."/>
            <person name="Dewar K."/>
            <person name="FitzGerald M.G."/>
            <person name="Kodira C.D."/>
            <person name="Madan A."/>
            <person name="Qin S."/>
            <person name="Yang X."/>
            <person name="Abbasi N."/>
            <person name="Abouelleil A."/>
            <person name="Arachchi H.M."/>
            <person name="Baradarani L."/>
            <person name="Birditt B."/>
            <person name="Bloom S."/>
            <person name="Bloom T."/>
            <person name="Borowsky M.L."/>
            <person name="Burke J."/>
            <person name="Butler J."/>
            <person name="Cook A."/>
            <person name="DeArellano K."/>
            <person name="DeCaprio D."/>
            <person name="Dorris L. III"/>
            <person name="Dors M."/>
            <person name="Eichler E.E."/>
            <person name="Engels R."/>
            <person name="Fahey J."/>
            <person name="Fleetwood P."/>
            <person name="Friedman C."/>
            <person name="Gearin G."/>
            <person name="Hall J.L."/>
            <person name="Hensley G."/>
            <person name="Johnson E."/>
            <person name="Jones C."/>
            <person name="Kamat A."/>
            <person name="Kaur A."/>
            <person name="Locke D.P."/>
            <person name="Madan A."/>
            <person name="Munson G."/>
            <person name="Jaffe D.B."/>
            <person name="Lui A."/>
            <person name="Macdonald P."/>
            <person name="Mauceli E."/>
            <person name="Naylor J.W."/>
            <person name="Nesbitt R."/>
            <person name="Nicol R."/>
            <person name="O'Leary S.B."/>
            <person name="Ratcliffe A."/>
            <person name="Rounsley S."/>
            <person name="She X."/>
            <person name="Sneddon K.M.B."/>
            <person name="Stewart S."/>
            <person name="Sougnez C."/>
            <person name="Stone S.M."/>
            <person name="Topham K."/>
            <person name="Vincent D."/>
            <person name="Wang S."/>
            <person name="Zimmer A.R."/>
            <person name="Birren B.W."/>
            <person name="Hood L."/>
            <person name="Lander E.S."/>
            <person name="Nusbaum C."/>
        </authorList>
    </citation>
    <scope>NUCLEOTIDE SEQUENCE [LARGE SCALE GENOMIC DNA]</scope>
</reference>
<reference key="5">
    <citation type="journal article" date="2004" name="Genome Res.">
        <title>The status, quality, and expansion of the NIH full-length cDNA project: the Mammalian Gene Collection (MGC).</title>
        <authorList>
            <consortium name="The MGC Project Team"/>
        </authorList>
    </citation>
    <scope>NUCLEOTIDE SEQUENCE [LARGE SCALE MRNA]</scope>
</reference>
<reference evidence="14" key="6">
    <citation type="journal article" date="2001" name="EMBO J.">
        <title>Autophosphorylation restrains the apoptotic activity of DRP-1 kinase by controlling dimerization and calmodulin binding.</title>
        <authorList>
            <person name="Shani G."/>
            <person name="Henis-Korenblit S."/>
            <person name="Jona G."/>
            <person name="Gileadi O."/>
            <person name="Eisenstein M."/>
            <person name="Ziv T."/>
            <person name="Admon A."/>
            <person name="Kimchi A."/>
        </authorList>
    </citation>
    <scope>FUNCTION</scope>
    <scope>HOMODIMERIZATION</scope>
    <scope>MUTAGENESIS OF LYS-52; SER-299; SER-318; SER-320; SER-323 AND THR-329</scope>
    <scope>PHOSPHORYLATION AT SER-318</scope>
</reference>
<reference key="7">
    <citation type="journal article" date="2002" name="Biochim. Biophys. Acta">
        <title>The DAP-kinase family of proteins: study of a novel group of calcium-regulated death-promoting kinases.</title>
        <authorList>
            <person name="Shohat G."/>
            <person name="Shani G."/>
            <person name="Eisenstein M."/>
            <person name="Kimchi A."/>
        </authorList>
    </citation>
    <scope>REVIEW</scope>
</reference>
<reference key="8">
    <citation type="journal article" date="2002" name="J. Cell Biol.">
        <title>DAP kinase and DRP-1 mediate membrane blebbing and the formation of autophagic vesicles during programmed cell death.</title>
        <authorList>
            <person name="Inbal B."/>
            <person name="Bialik S."/>
            <person name="Sabanay I."/>
            <person name="Shani G."/>
            <person name="Kimchi A."/>
        </authorList>
    </citation>
    <scope>FUNCTION</scope>
    <scope>SUBCELLULAR LOCATION</scope>
</reference>
<reference key="9">
    <citation type="journal article" date="2006" name="Annu. Rev. Biochem.">
        <title>The death-associated protein kinases: structure, function, and beyond.</title>
        <authorList>
            <person name="Bialik S."/>
            <person name="Kimchi A."/>
        </authorList>
    </citation>
    <scope>REVIEW ON FUNCTION</scope>
</reference>
<reference key="10">
    <citation type="journal article" date="2007" name="J. Leukoc. Biol.">
        <title>The death-associated protein kinase 2 is up-regulated during normal myeloid differentiation and enhances neutrophil maturation in myeloid leukemic cells.</title>
        <authorList>
            <person name="Rizzi M."/>
            <person name="Tschan M.P."/>
            <person name="Britschgi C."/>
            <person name="Britschgi A."/>
            <person name="Huegli B."/>
            <person name="Grob T.J."/>
            <person name="Leupin N."/>
            <person name="Mueller B.U."/>
            <person name="Simon H.U."/>
            <person name="Ziemiecki A."/>
            <person name="Torbett B.E."/>
            <person name="Fey M.F."/>
            <person name="Tobler A."/>
        </authorList>
    </citation>
    <scope>FUNCTION</scope>
    <scope>INDUCTION</scope>
    <scope>TISSUE SPECIFICITY</scope>
</reference>
<reference key="11">
    <citation type="journal article" date="2008" name="Proc. Natl. Acad. Sci. U.S.A.">
        <title>A quantitative atlas of mitotic phosphorylation.</title>
        <authorList>
            <person name="Dephoure N."/>
            <person name="Zhou C."/>
            <person name="Villen J."/>
            <person name="Beausoleil S.A."/>
            <person name="Bakalarski C.E."/>
            <person name="Elledge S.J."/>
            <person name="Gygi S.P."/>
        </authorList>
    </citation>
    <scope>PHOSPHORYLATION [LARGE SCALE ANALYSIS] AT SER-349</scope>
    <scope>IDENTIFICATION BY MASS SPECTROMETRY [LARGE SCALE ANALYSIS]</scope>
    <source>
        <tissue>Cervix carcinoma</tissue>
    </source>
</reference>
<reference key="12">
    <citation type="journal article" date="2009" name="J. Biol. Chem.">
        <title>Down-regulation of death-associated protein kinase-2 is required for beta-catenin-induced anoikis resistance of malignant epithelial cells.</title>
        <authorList>
            <person name="Li H."/>
            <person name="Ray G."/>
            <person name="Yoo B.H."/>
            <person name="Erdogan M."/>
            <person name="Rosen K.V."/>
        </authorList>
    </citation>
    <scope>FUNCTION</scope>
</reference>
<reference key="13">
    <citation type="journal article" date="2013" name="J. Proteome Res.">
        <title>Toward a comprehensive characterization of a human cancer cell phosphoproteome.</title>
        <authorList>
            <person name="Zhou H."/>
            <person name="Di Palma S."/>
            <person name="Preisinger C."/>
            <person name="Peng M."/>
            <person name="Polat A.N."/>
            <person name="Heck A.J."/>
            <person name="Mohammed S."/>
        </authorList>
    </citation>
    <scope>PHOSPHORYLATION [LARGE SCALE ANALYSIS] AT SER-299 AND SER-349</scope>
    <scope>IDENTIFICATION BY MASS SPECTROMETRY [LARGE SCALE ANALYSIS]</scope>
    <source>
        <tissue>Cervix carcinoma</tissue>
        <tissue>Erythroleukemia</tissue>
    </source>
</reference>
<reference key="14">
    <citation type="journal article" date="2014" name="J. Leukoc. Biol.">
        <title>DAPK2 positively regulates motility of neutrophils and eosinophils in response to intermediary chemoattractants.</title>
        <authorList>
            <person name="Geering B."/>
            <person name="Stoeckle C."/>
            <person name="Rozman S."/>
            <person name="Oberson K."/>
            <person name="Benarafa C."/>
            <person name="Simon H.U."/>
        </authorList>
    </citation>
    <scope>FUNCTION</scope>
    <scope>TISSUE SPECIFICITY</scope>
    <scope>INDUCTION</scope>
</reference>
<reference key="15">
    <citation type="journal article" date="2015" name="Biochem. Biophys. Res. Commun.">
        <title>Suppression of death-associated protein kinase 2 by interaction with 14-3-3 proteins.</title>
        <authorList>
            <person name="Yuasa K."/>
            <person name="Ota R."/>
            <person name="Matsuda S."/>
            <person name="Isshiki K."/>
            <person name="Inoue M."/>
            <person name="Tsuji A."/>
        </authorList>
    </citation>
    <scope>INTERACTION WITH 14-3-3 PROTEINS</scope>
    <scope>MUTAGENESIS OF SER-367; SER-368; THR-369 AND SER-370</scope>
    <scope>PHOSPHORYLATION AT THR-369</scope>
    <scope>FUNCTION</scope>
    <scope>CATALYTIC ACTIVITY</scope>
</reference>
<reference key="16">
    <citation type="journal article" date="2007" name="Nature">
        <title>Patterns of somatic mutation in human cancer genomes.</title>
        <authorList>
            <person name="Greenman C."/>
            <person name="Stephens P."/>
            <person name="Smith R."/>
            <person name="Dalgliesh G.L."/>
            <person name="Hunter C."/>
            <person name="Bignell G."/>
            <person name="Davies H."/>
            <person name="Teague J."/>
            <person name="Butler A."/>
            <person name="Stevens C."/>
            <person name="Edkins S."/>
            <person name="O'Meara S."/>
            <person name="Vastrik I."/>
            <person name="Schmidt E.E."/>
            <person name="Avis T."/>
            <person name="Barthorpe S."/>
            <person name="Bhamra G."/>
            <person name="Buck G."/>
            <person name="Choudhury B."/>
            <person name="Clements J."/>
            <person name="Cole J."/>
            <person name="Dicks E."/>
            <person name="Forbes S."/>
            <person name="Gray K."/>
            <person name="Halliday K."/>
            <person name="Harrison R."/>
            <person name="Hills K."/>
            <person name="Hinton J."/>
            <person name="Jenkinson A."/>
            <person name="Jones D."/>
            <person name="Menzies A."/>
            <person name="Mironenko T."/>
            <person name="Perry J."/>
            <person name="Raine K."/>
            <person name="Richardson D."/>
            <person name="Shepherd R."/>
            <person name="Small A."/>
            <person name="Tofts C."/>
            <person name="Varian J."/>
            <person name="Webb T."/>
            <person name="West S."/>
            <person name="Widaa S."/>
            <person name="Yates A."/>
            <person name="Cahill D.P."/>
            <person name="Louis D.N."/>
            <person name="Goldstraw P."/>
            <person name="Nicholson A.G."/>
            <person name="Brasseur F."/>
            <person name="Looijenga L."/>
            <person name="Weber B.L."/>
            <person name="Chiew Y.-E."/>
            <person name="DeFazio A."/>
            <person name="Greaves M.F."/>
            <person name="Green A.R."/>
            <person name="Campbell P."/>
            <person name="Birney E."/>
            <person name="Easton D.F."/>
            <person name="Chenevix-Trench G."/>
            <person name="Tan M.-H."/>
            <person name="Khoo S.K."/>
            <person name="Teh B.T."/>
            <person name="Yuen S.T."/>
            <person name="Leung S.Y."/>
            <person name="Wooster R."/>
            <person name="Futreal P.A."/>
            <person name="Stratton M.R."/>
        </authorList>
    </citation>
    <scope>VARIANTS [LARGE SCALE ANALYSIS] TRP-60 AND TRP-271</scope>
</reference>
<name>DAPK2_HUMAN</name>
<gene>
    <name type="primary">DAPK2</name>
</gene>